<protein>
    <recommendedName>
        <fullName evidence="1">Small ribosomal subunit protein uS15</fullName>
    </recommendedName>
    <alternativeName>
        <fullName>40S ribosomal protein S13</fullName>
    </alternativeName>
</protein>
<comment type="similarity">
    <text evidence="1">Belongs to the universal ribosomal protein uS15 family.</text>
</comment>
<reference key="1">
    <citation type="submission" date="2003-10" db="EMBL/GenBank/DDBJ databases">
        <title>Molecular cloning of low temperature-inducible ribosomal proteins from soybean.</title>
        <authorList>
            <person name="Park S.-W."/>
            <person name="Kim K.-Y."/>
            <person name="Lee J.-H."/>
        </authorList>
    </citation>
    <scope>NUCLEOTIDE SEQUENCE [MRNA]</scope>
    <source>
        <strain>cv. Sinpaldal2</strain>
    </source>
</reference>
<feature type="chain" id="PRO_0000115684" description="Small ribosomal subunit protein uS15">
    <location>
        <begin position="1"/>
        <end position="151"/>
    </location>
</feature>
<gene>
    <name type="primary">RPS13</name>
</gene>
<accession>P62302</accession>
<dbReference type="EMBL" id="AY453393">
    <property type="protein sequence ID" value="AAS47510.1"/>
    <property type="molecule type" value="mRNA"/>
</dbReference>
<dbReference type="RefSeq" id="NP_001237229.1">
    <property type="nucleotide sequence ID" value="NM_001250300.3"/>
</dbReference>
<dbReference type="RefSeq" id="XP_003525762.1">
    <property type="nucleotide sequence ID" value="XM_003525714.3"/>
</dbReference>
<dbReference type="RefSeq" id="XP_003525763.1">
    <property type="nucleotide sequence ID" value="XM_003525715.3"/>
</dbReference>
<dbReference type="SMR" id="P62302"/>
<dbReference type="FunCoup" id="P62302">
    <property type="interactions" value="5311"/>
</dbReference>
<dbReference type="STRING" id="3847.P62302"/>
<dbReference type="PaxDb" id="3847-GLYMA05G03850.1"/>
<dbReference type="EnsemblPlants" id="KRH04022">
    <property type="protein sequence ID" value="KRH04022"/>
    <property type="gene ID" value="GLYMA_17G134800"/>
</dbReference>
<dbReference type="EnsemblPlants" id="KRH57294">
    <property type="protein sequence ID" value="KRH57294"/>
    <property type="gene ID" value="GLYMA_05G052300"/>
</dbReference>
<dbReference type="EnsemblPlants" id="KRH57296">
    <property type="protein sequence ID" value="KRH57296"/>
    <property type="gene ID" value="GLYMA_05G052400"/>
</dbReference>
<dbReference type="EnsemblPlants" id="KRH57298">
    <property type="protein sequence ID" value="KRH57298"/>
    <property type="gene ID" value="GLYMA_05G052600"/>
</dbReference>
<dbReference type="EnsemblPlants" id="KRH57299">
    <property type="protein sequence ID" value="KRH57299"/>
    <property type="gene ID" value="GLYMA_05G052600"/>
</dbReference>
<dbReference type="GeneID" id="547745"/>
<dbReference type="Gramene" id="KRH04022">
    <property type="protein sequence ID" value="KRH04022"/>
    <property type="gene ID" value="GLYMA_17G134800"/>
</dbReference>
<dbReference type="Gramene" id="KRH57294">
    <property type="protein sequence ID" value="KRH57294"/>
    <property type="gene ID" value="GLYMA_05G052300"/>
</dbReference>
<dbReference type="Gramene" id="KRH57296">
    <property type="protein sequence ID" value="KRH57296"/>
    <property type="gene ID" value="GLYMA_05G052400"/>
</dbReference>
<dbReference type="Gramene" id="KRH57298">
    <property type="protein sequence ID" value="KRH57298"/>
    <property type="gene ID" value="GLYMA_05G052600"/>
</dbReference>
<dbReference type="Gramene" id="KRH57299">
    <property type="protein sequence ID" value="KRH57299"/>
    <property type="gene ID" value="GLYMA_05G052600"/>
</dbReference>
<dbReference type="KEGG" id="gmx:100790163"/>
<dbReference type="KEGG" id="gmx:547745"/>
<dbReference type="eggNOG" id="KOG0400">
    <property type="taxonomic scope" value="Eukaryota"/>
</dbReference>
<dbReference type="HOGENOM" id="CLU_090139_1_0_1"/>
<dbReference type="InParanoid" id="P62302"/>
<dbReference type="OMA" id="MHTRRKG"/>
<dbReference type="OrthoDB" id="1337082at2759"/>
<dbReference type="Proteomes" id="UP000008827">
    <property type="component" value="Chromosome 17"/>
</dbReference>
<dbReference type="Proteomes" id="UP000008827">
    <property type="component" value="Chromosome 5"/>
</dbReference>
<dbReference type="GO" id="GO:0022627">
    <property type="term" value="C:cytosolic small ribosomal subunit"/>
    <property type="evidence" value="ECO:0000318"/>
    <property type="project" value="GO_Central"/>
</dbReference>
<dbReference type="GO" id="GO:0005730">
    <property type="term" value="C:nucleolus"/>
    <property type="evidence" value="ECO:0000318"/>
    <property type="project" value="GO_Central"/>
</dbReference>
<dbReference type="GO" id="GO:0070181">
    <property type="term" value="F:small ribosomal subunit rRNA binding"/>
    <property type="evidence" value="ECO:0000318"/>
    <property type="project" value="GO_Central"/>
</dbReference>
<dbReference type="GO" id="GO:0003735">
    <property type="term" value="F:structural constituent of ribosome"/>
    <property type="evidence" value="ECO:0000318"/>
    <property type="project" value="GO_Central"/>
</dbReference>
<dbReference type="GO" id="GO:0006412">
    <property type="term" value="P:translation"/>
    <property type="evidence" value="ECO:0007669"/>
    <property type="project" value="InterPro"/>
</dbReference>
<dbReference type="CDD" id="cd00353">
    <property type="entry name" value="Ribosomal_S15p_S13e"/>
    <property type="match status" value="1"/>
</dbReference>
<dbReference type="FunFam" id="1.10.287.10:FF:000003">
    <property type="entry name" value="40S ribosomal protein S13"/>
    <property type="match status" value="1"/>
</dbReference>
<dbReference type="FunFam" id="4.10.860.130:FF:000001">
    <property type="entry name" value="40S ribosomal protein S13"/>
    <property type="match status" value="1"/>
</dbReference>
<dbReference type="Gene3D" id="4.10.860.130">
    <property type="match status" value="1"/>
</dbReference>
<dbReference type="Gene3D" id="1.10.287.10">
    <property type="entry name" value="S15/NS1, RNA-binding"/>
    <property type="match status" value="1"/>
</dbReference>
<dbReference type="HAMAP" id="MF_01343_A">
    <property type="entry name" value="Ribosomal_uS15_A"/>
    <property type="match status" value="1"/>
</dbReference>
<dbReference type="InterPro" id="IPR000589">
    <property type="entry name" value="Ribosomal_uS15"/>
</dbReference>
<dbReference type="InterPro" id="IPR023029">
    <property type="entry name" value="Ribosomal_uS15_arc_euk"/>
</dbReference>
<dbReference type="InterPro" id="IPR012606">
    <property type="entry name" value="Ribosomal_uS15_N"/>
</dbReference>
<dbReference type="InterPro" id="IPR009068">
    <property type="entry name" value="uS15_NS1_RNA-bd_sf"/>
</dbReference>
<dbReference type="NCBIfam" id="NF006331">
    <property type="entry name" value="PRK08561.1"/>
    <property type="match status" value="1"/>
</dbReference>
<dbReference type="PANTHER" id="PTHR11885">
    <property type="entry name" value="RIBOSOMAL PROTEIN S15P/S13E"/>
    <property type="match status" value="1"/>
</dbReference>
<dbReference type="PANTHER" id="PTHR11885:SF25">
    <property type="entry name" value="SMALL RIBOSOMAL SUBUNIT PROTEIN US15Y-RELATED"/>
    <property type="match status" value="1"/>
</dbReference>
<dbReference type="Pfam" id="PF08069">
    <property type="entry name" value="Ribosomal_S13_N"/>
    <property type="match status" value="1"/>
</dbReference>
<dbReference type="Pfam" id="PF00312">
    <property type="entry name" value="Ribosomal_S15"/>
    <property type="match status" value="1"/>
</dbReference>
<dbReference type="SMART" id="SM01386">
    <property type="entry name" value="Ribosomal_S13_N"/>
    <property type="match status" value="1"/>
</dbReference>
<dbReference type="SMART" id="SM01387">
    <property type="entry name" value="Ribosomal_S15"/>
    <property type="match status" value="1"/>
</dbReference>
<dbReference type="SUPFAM" id="SSF47060">
    <property type="entry name" value="S15/NS1 RNA-binding domain"/>
    <property type="match status" value="1"/>
</dbReference>
<dbReference type="PROSITE" id="PS00362">
    <property type="entry name" value="RIBOSOMAL_S15"/>
    <property type="match status" value="1"/>
</dbReference>
<organism>
    <name type="scientific">Glycine max</name>
    <name type="common">Soybean</name>
    <name type="synonym">Glycine hispida</name>
    <dbReference type="NCBI Taxonomy" id="3847"/>
    <lineage>
        <taxon>Eukaryota</taxon>
        <taxon>Viridiplantae</taxon>
        <taxon>Streptophyta</taxon>
        <taxon>Embryophyta</taxon>
        <taxon>Tracheophyta</taxon>
        <taxon>Spermatophyta</taxon>
        <taxon>Magnoliopsida</taxon>
        <taxon>eudicotyledons</taxon>
        <taxon>Gunneridae</taxon>
        <taxon>Pentapetalae</taxon>
        <taxon>rosids</taxon>
        <taxon>fabids</taxon>
        <taxon>Fabales</taxon>
        <taxon>Fabaceae</taxon>
        <taxon>Papilionoideae</taxon>
        <taxon>50 kb inversion clade</taxon>
        <taxon>NPAAA clade</taxon>
        <taxon>indigoferoid/millettioid clade</taxon>
        <taxon>Phaseoleae</taxon>
        <taxon>Glycine</taxon>
        <taxon>Glycine subgen. Soja</taxon>
    </lineage>
</organism>
<name>RS13_SOYBN</name>
<sequence>MGRMHSRGKGISSSALPYKRTPPSWLKISSQDVEENICKFAKKGLTPSQIGVILRDSHGIAQVNSVTGSKILRILKAHGLAPEIPEDLYHLIKKAVSIRKHLERNRKDKDSKFRLILVESRIHRLARYYKKTKKLPPVWKYESTTASTLVA</sequence>
<keyword id="KW-1185">Reference proteome</keyword>
<keyword id="KW-0687">Ribonucleoprotein</keyword>
<keyword id="KW-0689">Ribosomal protein</keyword>
<proteinExistence type="evidence at transcript level"/>
<evidence type="ECO:0000305" key="1"/>